<keyword id="KW-0067">ATP-binding</keyword>
<keyword id="KW-0418">Kinase</keyword>
<keyword id="KW-0547">Nucleotide-binding</keyword>
<keyword id="KW-0539">Nucleus</keyword>
<keyword id="KW-1185">Reference proteome</keyword>
<keyword id="KW-0723">Serine/threonine-protein kinase</keyword>
<keyword id="KW-0804">Transcription</keyword>
<keyword id="KW-0805">Transcription regulation</keyword>
<keyword id="KW-0808">Transferase</keyword>
<reference key="1">
    <citation type="submission" date="2006-03" db="EMBL/GenBank/DDBJ databases">
        <authorList>
            <consortium name="Sanger Xenopus tropicalis EST/cDNA project"/>
        </authorList>
    </citation>
    <scope>NUCLEOTIDE SEQUENCE [LARGE SCALE MRNA]</scope>
    <source>
        <tissue>Gastrula</tissue>
    </source>
</reference>
<reference key="2">
    <citation type="submission" date="2004-06" db="EMBL/GenBank/DDBJ databases">
        <authorList>
            <consortium name="NIH - Xenopus Gene Collection (XGC) project"/>
        </authorList>
    </citation>
    <scope>NUCLEOTIDE SEQUENCE [LARGE SCALE MRNA]</scope>
    <source>
        <tissue>Embryo</tissue>
    </source>
</reference>
<organism>
    <name type="scientific">Xenopus tropicalis</name>
    <name type="common">Western clawed frog</name>
    <name type="synonym">Silurana tropicalis</name>
    <dbReference type="NCBI Taxonomy" id="8364"/>
    <lineage>
        <taxon>Eukaryota</taxon>
        <taxon>Metazoa</taxon>
        <taxon>Chordata</taxon>
        <taxon>Craniata</taxon>
        <taxon>Vertebrata</taxon>
        <taxon>Euteleostomi</taxon>
        <taxon>Amphibia</taxon>
        <taxon>Batrachia</taxon>
        <taxon>Anura</taxon>
        <taxon>Pipoidea</taxon>
        <taxon>Pipidae</taxon>
        <taxon>Xenopodinae</taxon>
        <taxon>Xenopus</taxon>
        <taxon>Silurana</taxon>
    </lineage>
</organism>
<comment type="function">
    <text evidence="2">Member of the cyclin-dependent kinase pair (CDK9/cyclin-T) complex, also called positive transcription elongation factor B (P-TEFb), which is proposed to facilitate the transition from abortive to production elongation by phosphorylating the CTD (C-terminal domain) of the large subunit of RNA polymerase II (RNAP II) and SUPT5H.</text>
</comment>
<comment type="catalytic activity">
    <reaction evidence="2">
        <text>L-seryl-[protein] + ATP = O-phospho-L-seryl-[protein] + ADP + H(+)</text>
        <dbReference type="Rhea" id="RHEA:17989"/>
        <dbReference type="Rhea" id="RHEA-COMP:9863"/>
        <dbReference type="Rhea" id="RHEA-COMP:11604"/>
        <dbReference type="ChEBI" id="CHEBI:15378"/>
        <dbReference type="ChEBI" id="CHEBI:29999"/>
        <dbReference type="ChEBI" id="CHEBI:30616"/>
        <dbReference type="ChEBI" id="CHEBI:83421"/>
        <dbReference type="ChEBI" id="CHEBI:456216"/>
        <dbReference type="EC" id="2.7.11.22"/>
    </reaction>
    <physiologicalReaction direction="left-to-right" evidence="2">
        <dbReference type="Rhea" id="RHEA:17990"/>
    </physiologicalReaction>
</comment>
<comment type="catalytic activity">
    <reaction evidence="2">
        <text>L-threonyl-[protein] + ATP = O-phospho-L-threonyl-[protein] + ADP + H(+)</text>
        <dbReference type="Rhea" id="RHEA:46608"/>
        <dbReference type="Rhea" id="RHEA-COMP:11060"/>
        <dbReference type="Rhea" id="RHEA-COMP:11605"/>
        <dbReference type="ChEBI" id="CHEBI:15378"/>
        <dbReference type="ChEBI" id="CHEBI:30013"/>
        <dbReference type="ChEBI" id="CHEBI:30616"/>
        <dbReference type="ChEBI" id="CHEBI:61977"/>
        <dbReference type="ChEBI" id="CHEBI:456216"/>
        <dbReference type="EC" id="2.7.11.22"/>
    </reaction>
    <physiologicalReaction direction="left-to-right" evidence="2">
        <dbReference type="Rhea" id="RHEA:46609"/>
    </physiologicalReaction>
</comment>
<comment type="catalytic activity">
    <reaction evidence="2">
        <text>[DNA-directed RNA polymerase] + ATP = phospho-[DNA-directed RNA polymerase] + ADP + H(+)</text>
        <dbReference type="Rhea" id="RHEA:10216"/>
        <dbReference type="Rhea" id="RHEA-COMP:11321"/>
        <dbReference type="Rhea" id="RHEA-COMP:11322"/>
        <dbReference type="ChEBI" id="CHEBI:15378"/>
        <dbReference type="ChEBI" id="CHEBI:30616"/>
        <dbReference type="ChEBI" id="CHEBI:43176"/>
        <dbReference type="ChEBI" id="CHEBI:68546"/>
        <dbReference type="ChEBI" id="CHEBI:456216"/>
        <dbReference type="EC" id="2.7.11.23"/>
    </reaction>
    <physiologicalReaction direction="left-to-right" evidence="2">
        <dbReference type="Rhea" id="RHEA:10217"/>
    </physiologicalReaction>
</comment>
<comment type="subunit">
    <text evidence="1">Associates with cyclin-T to form P-TEFb.</text>
</comment>
<comment type="subcellular location">
    <subcellularLocation>
        <location evidence="1">Nucleus</location>
    </subcellularLocation>
</comment>
<comment type="similarity">
    <text evidence="6">Belongs to the protein kinase superfamily. CMGC Ser/Thr protein kinase family. CDC2/CDKX subfamily.</text>
</comment>
<gene>
    <name type="primary">cdk9</name>
    <name type="ORF">TGas123e01.1</name>
</gene>
<name>CDK9_XENTR</name>
<evidence type="ECO:0000250" key="1"/>
<evidence type="ECO:0000250" key="2">
    <source>
        <dbReference type="UniProtKB" id="P50750"/>
    </source>
</evidence>
<evidence type="ECO:0000255" key="3">
    <source>
        <dbReference type="PROSITE-ProRule" id="PRU00159"/>
    </source>
</evidence>
<evidence type="ECO:0000255" key="4">
    <source>
        <dbReference type="PROSITE-ProRule" id="PRU10027"/>
    </source>
</evidence>
<evidence type="ECO:0000256" key="5">
    <source>
        <dbReference type="SAM" id="MobiDB-lite"/>
    </source>
</evidence>
<evidence type="ECO:0000305" key="6"/>
<proteinExistence type="evidence at transcript level"/>
<protein>
    <recommendedName>
        <fullName>Cyclin-dependent kinase 9</fullName>
        <ecNumber>2.7.11.22</ecNumber>
        <ecNumber>2.7.11.23</ecNumber>
    </recommendedName>
    <alternativeName>
        <fullName>Cell division protein kinase 9</fullName>
    </alternativeName>
</protein>
<dbReference type="EC" id="2.7.11.22"/>
<dbReference type="EC" id="2.7.11.23"/>
<dbReference type="EMBL" id="CR762201">
    <property type="protein sequence ID" value="CAJ82512.1"/>
    <property type="molecule type" value="mRNA"/>
</dbReference>
<dbReference type="EMBL" id="BC074560">
    <property type="protein sequence ID" value="AAH74560.1"/>
    <property type="molecule type" value="mRNA"/>
</dbReference>
<dbReference type="RefSeq" id="NP_001005448.1">
    <property type="nucleotide sequence ID" value="NM_001005448.1"/>
</dbReference>
<dbReference type="SMR" id="Q6GLD8"/>
<dbReference type="FunCoup" id="Q6GLD8">
    <property type="interactions" value="3605"/>
</dbReference>
<dbReference type="STRING" id="8364.ENSXETP00000030048"/>
<dbReference type="PaxDb" id="8364-ENSXETP00000031527"/>
<dbReference type="DNASU" id="448039"/>
<dbReference type="GeneID" id="448039"/>
<dbReference type="KEGG" id="xtr:448039"/>
<dbReference type="AGR" id="Xenbase:XB-GENE-483721"/>
<dbReference type="CTD" id="1025"/>
<dbReference type="Xenbase" id="XB-GENE-483721">
    <property type="gene designation" value="cdk9"/>
</dbReference>
<dbReference type="eggNOG" id="KOG0669">
    <property type="taxonomic scope" value="Eukaryota"/>
</dbReference>
<dbReference type="HOGENOM" id="CLU_000288_181_1_1"/>
<dbReference type="InParanoid" id="Q6GLD8"/>
<dbReference type="OrthoDB" id="204883at2759"/>
<dbReference type="TreeFam" id="TF101039"/>
<dbReference type="Reactome" id="R-XTR-112382">
    <property type="pathway name" value="Formation of RNA Pol II elongation complex"/>
</dbReference>
<dbReference type="Reactome" id="R-XTR-674695">
    <property type="pathway name" value="RNA Polymerase II Pre-transcription Events"/>
</dbReference>
<dbReference type="Reactome" id="R-XTR-6796648">
    <property type="pathway name" value="TP53 Regulates Transcription of DNA Repair Genes"/>
</dbReference>
<dbReference type="Reactome" id="R-XTR-6807505">
    <property type="pathway name" value="RNA polymerase II transcribes snRNA genes"/>
</dbReference>
<dbReference type="Reactome" id="R-XTR-75955">
    <property type="pathway name" value="RNA Polymerase II Transcription Elongation"/>
</dbReference>
<dbReference type="Reactome" id="R-XTR-9018519">
    <property type="pathway name" value="Estrogen-dependent gene expression"/>
</dbReference>
<dbReference type="Proteomes" id="UP000008143">
    <property type="component" value="Chromosome 8"/>
</dbReference>
<dbReference type="Bgee" id="ENSXETG00000024742">
    <property type="expression patterns" value="Expressed in gastrula and 15 other cell types or tissues"/>
</dbReference>
<dbReference type="GO" id="GO:0070691">
    <property type="term" value="C:P-TEFb complex"/>
    <property type="evidence" value="ECO:0000250"/>
    <property type="project" value="UniProtKB"/>
</dbReference>
<dbReference type="GO" id="GO:0005524">
    <property type="term" value="F:ATP binding"/>
    <property type="evidence" value="ECO:0007669"/>
    <property type="project" value="UniProtKB-KW"/>
</dbReference>
<dbReference type="GO" id="GO:0004693">
    <property type="term" value="F:cyclin-dependent protein serine/threonine kinase activity"/>
    <property type="evidence" value="ECO:0007669"/>
    <property type="project" value="UniProtKB-EC"/>
</dbReference>
<dbReference type="GO" id="GO:0106310">
    <property type="term" value="F:protein serine kinase activity"/>
    <property type="evidence" value="ECO:0007669"/>
    <property type="project" value="RHEA"/>
</dbReference>
<dbReference type="GO" id="GO:0004674">
    <property type="term" value="F:protein serine/threonine kinase activity"/>
    <property type="evidence" value="ECO:0000250"/>
    <property type="project" value="UniProtKB"/>
</dbReference>
<dbReference type="GO" id="GO:0008353">
    <property type="term" value="F:RNA polymerase II CTD heptapeptide repeat kinase activity"/>
    <property type="evidence" value="ECO:0000250"/>
    <property type="project" value="UniProtKB"/>
</dbReference>
<dbReference type="GO" id="GO:0120187">
    <property type="term" value="P:positive regulation of protein localization to chromatin"/>
    <property type="evidence" value="ECO:0000250"/>
    <property type="project" value="UniProtKB"/>
</dbReference>
<dbReference type="GO" id="GO:0045944">
    <property type="term" value="P:positive regulation of transcription by RNA polymerase II"/>
    <property type="evidence" value="ECO:0000250"/>
    <property type="project" value="UniProtKB"/>
</dbReference>
<dbReference type="GO" id="GO:0032968">
    <property type="term" value="P:positive regulation of transcription elongation by RNA polymerase II"/>
    <property type="evidence" value="ECO:0000250"/>
    <property type="project" value="UniProtKB"/>
</dbReference>
<dbReference type="GO" id="GO:0006366">
    <property type="term" value="P:transcription by RNA polymerase II"/>
    <property type="evidence" value="ECO:0000250"/>
    <property type="project" value="UniProtKB"/>
</dbReference>
<dbReference type="CDD" id="cd07865">
    <property type="entry name" value="STKc_CDK9"/>
    <property type="match status" value="1"/>
</dbReference>
<dbReference type="FunFam" id="1.10.510.10:FF:000203">
    <property type="entry name" value="Cyclin-dependent kinase 9"/>
    <property type="match status" value="1"/>
</dbReference>
<dbReference type="FunFam" id="3.30.200.20:FF:000227">
    <property type="entry name" value="Cyclin-dependent kinase 9"/>
    <property type="match status" value="1"/>
</dbReference>
<dbReference type="Gene3D" id="3.30.200.20">
    <property type="entry name" value="Phosphorylase Kinase, domain 1"/>
    <property type="match status" value="1"/>
</dbReference>
<dbReference type="Gene3D" id="1.10.510.10">
    <property type="entry name" value="Transferase(Phosphotransferase) domain 1"/>
    <property type="match status" value="1"/>
</dbReference>
<dbReference type="InterPro" id="IPR050108">
    <property type="entry name" value="CDK"/>
</dbReference>
<dbReference type="InterPro" id="IPR011009">
    <property type="entry name" value="Kinase-like_dom_sf"/>
</dbReference>
<dbReference type="InterPro" id="IPR000719">
    <property type="entry name" value="Prot_kinase_dom"/>
</dbReference>
<dbReference type="InterPro" id="IPR017441">
    <property type="entry name" value="Protein_kinase_ATP_BS"/>
</dbReference>
<dbReference type="InterPro" id="IPR008271">
    <property type="entry name" value="Ser/Thr_kinase_AS"/>
</dbReference>
<dbReference type="PANTHER" id="PTHR24056">
    <property type="entry name" value="CELL DIVISION PROTEIN KINASE"/>
    <property type="match status" value="1"/>
</dbReference>
<dbReference type="PANTHER" id="PTHR24056:SF233">
    <property type="entry name" value="CYCLIN-DEPENDENT KINASE 9"/>
    <property type="match status" value="1"/>
</dbReference>
<dbReference type="Pfam" id="PF00069">
    <property type="entry name" value="Pkinase"/>
    <property type="match status" value="1"/>
</dbReference>
<dbReference type="SMART" id="SM00220">
    <property type="entry name" value="S_TKc"/>
    <property type="match status" value="1"/>
</dbReference>
<dbReference type="SUPFAM" id="SSF56112">
    <property type="entry name" value="Protein kinase-like (PK-like)"/>
    <property type="match status" value="1"/>
</dbReference>
<dbReference type="PROSITE" id="PS00107">
    <property type="entry name" value="PROTEIN_KINASE_ATP"/>
    <property type="match status" value="1"/>
</dbReference>
<dbReference type="PROSITE" id="PS50011">
    <property type="entry name" value="PROTEIN_KINASE_DOM"/>
    <property type="match status" value="1"/>
</dbReference>
<dbReference type="PROSITE" id="PS00108">
    <property type="entry name" value="PROTEIN_KINASE_ST"/>
    <property type="match status" value="1"/>
</dbReference>
<feature type="chain" id="PRO_0000085806" description="Cyclin-dependent kinase 9">
    <location>
        <begin position="1"/>
        <end position="376"/>
    </location>
</feature>
<feature type="domain" description="Protein kinase" evidence="3">
    <location>
        <begin position="19"/>
        <end position="319"/>
    </location>
</feature>
<feature type="region of interest" description="Disordered" evidence="5">
    <location>
        <begin position="345"/>
        <end position="376"/>
    </location>
</feature>
<feature type="compositionally biased region" description="Low complexity" evidence="5">
    <location>
        <begin position="354"/>
        <end position="369"/>
    </location>
</feature>
<feature type="active site" description="Proton acceptor" evidence="3 4">
    <location>
        <position position="153"/>
    </location>
</feature>
<feature type="binding site" evidence="3">
    <location>
        <begin position="25"/>
        <end position="33"/>
    </location>
    <ligand>
        <name>ATP</name>
        <dbReference type="ChEBI" id="CHEBI:30616"/>
    </ligand>
</feature>
<feature type="binding site" evidence="3">
    <location>
        <position position="48"/>
    </location>
    <ligand>
        <name>ATP</name>
        <dbReference type="ChEBI" id="CHEBI:30616"/>
    </ligand>
</feature>
<sequence length="376" mass="43273">MAKNYDSVEFPYCDEVSKYERLAKIGQGTFGEVFKAKHRQTGKKVALKKVLMENEKEGFPITALREIKILQLLKHENVVNLIEICRTKISPTANQYNRCKGTIFLVFDFCEHDLAGLLSNAHVKFTLSEIKKVMQMLLNGLYYIHRNKILHRDMKAANVLITRDGVLKLADFGLARAFSLAKNSQPNKYTNRVVTLWYRPPELLLGERDYGPPIDLWGAGCIMAEMWTRSPIMQGNTEQHQLTLISQLCGSITPEVWPNVDKYELYQKLELPKGQKRKVKERLKAYVKDLYALDLIDKLLVLDPAQRIDSDDALNHDFFWSDPMPSDLKNMLSTHNQSMFEYLAPPRRRGGHMPQQPANQARNPAATNQSEFDRVF</sequence>
<accession>Q6GLD8</accession>
<accession>Q28F30</accession>